<accession>P59783</accession>
<reference key="1">
    <citation type="journal article" date="2002" name="Nucleic Acids Res.">
        <title>Genome sequence of Shigella flexneri 2a: insights into pathogenicity through comparison with genomes of Escherichia coli K12 and O157.</title>
        <authorList>
            <person name="Jin Q."/>
            <person name="Yuan Z."/>
            <person name="Xu J."/>
            <person name="Wang Y."/>
            <person name="Shen Y."/>
            <person name="Lu W."/>
            <person name="Wang J."/>
            <person name="Liu H."/>
            <person name="Yang J."/>
            <person name="Yang F."/>
            <person name="Zhang X."/>
            <person name="Zhang J."/>
            <person name="Yang G."/>
            <person name="Wu H."/>
            <person name="Qu D."/>
            <person name="Dong J."/>
            <person name="Sun L."/>
            <person name="Xue Y."/>
            <person name="Zhao A."/>
            <person name="Gao Y."/>
            <person name="Zhu J."/>
            <person name="Kan B."/>
            <person name="Ding K."/>
            <person name="Chen S."/>
            <person name="Cheng H."/>
            <person name="Yao Z."/>
            <person name="He B."/>
            <person name="Chen R."/>
            <person name="Ma D."/>
            <person name="Qiang B."/>
            <person name="Wen Y."/>
            <person name="Hou Y."/>
            <person name="Yu J."/>
        </authorList>
    </citation>
    <scope>NUCLEOTIDE SEQUENCE [LARGE SCALE GENOMIC DNA]</scope>
    <source>
        <strain>301 / Serotype 2a</strain>
    </source>
</reference>
<reference key="2">
    <citation type="journal article" date="2003" name="Infect. Immun.">
        <title>Complete genome sequence and comparative genomics of Shigella flexneri serotype 2a strain 2457T.</title>
        <authorList>
            <person name="Wei J."/>
            <person name="Goldberg M.B."/>
            <person name="Burland V."/>
            <person name="Venkatesan M.M."/>
            <person name="Deng W."/>
            <person name="Fournier G."/>
            <person name="Mayhew G.F."/>
            <person name="Plunkett G. III"/>
            <person name="Rose D.J."/>
            <person name="Darling A."/>
            <person name="Mau B."/>
            <person name="Perna N.T."/>
            <person name="Payne S.M."/>
            <person name="Runyen-Janecky L.J."/>
            <person name="Zhou S."/>
            <person name="Schwartz D.C."/>
            <person name="Blattner F.R."/>
        </authorList>
    </citation>
    <scope>NUCLEOTIDE SEQUENCE [LARGE SCALE GENOMIC DNA]</scope>
    <source>
        <strain>ATCC 700930 / 2457T / Serotype 2a</strain>
    </source>
</reference>
<name>YIDC_SHIFL</name>
<feature type="chain" id="PRO_0000124754" description="Membrane protein insertase YidC">
    <location>
        <begin position="1"/>
        <end position="548"/>
    </location>
</feature>
<feature type="transmembrane region" description="Helical" evidence="1">
    <location>
        <begin position="6"/>
        <end position="26"/>
    </location>
</feature>
<feature type="transmembrane region" description="Helical" evidence="1">
    <location>
        <begin position="350"/>
        <end position="370"/>
    </location>
</feature>
<feature type="transmembrane region" description="Helical" evidence="1">
    <location>
        <begin position="420"/>
        <end position="440"/>
    </location>
</feature>
<feature type="transmembrane region" description="Helical" evidence="1">
    <location>
        <begin position="458"/>
        <end position="478"/>
    </location>
</feature>
<feature type="transmembrane region" description="Helical" evidence="1">
    <location>
        <begin position="499"/>
        <end position="519"/>
    </location>
</feature>
<feature type="region of interest" description="Disordered" evidence="2">
    <location>
        <begin position="28"/>
        <end position="55"/>
    </location>
</feature>
<feature type="compositionally biased region" description="Low complexity" evidence="2">
    <location>
        <begin position="30"/>
        <end position="50"/>
    </location>
</feature>
<feature type="sequence conflict" description="In Ref. 2; AAP18995." evidence="3" ref="2">
    <original>F</original>
    <variation>L</variation>
    <location>
        <position position="476"/>
    </location>
</feature>
<sequence length="548" mass="61554">MDSQRNLLVIALLFVSFMIWQAWEQDKNPQPQAQQTTQTTTTAAGSAADQGVPASGQGKLISVKTDVLDLTINTRGGDVEQALLPAYPKELNSTQPFQLLETSPQFIYQAQSGLTGRDGPDNPANGPRPLYNVEKDAYVLAEGQNELQVPMTYTDAAGNTFTKTFVLKRGDYAVNVNYNVQNAGEKPLEISSFGQLKQSITLPPHLDTGSSNFALHTFRGAAYSTPDEKYEKYKFDTIADNENLNISSKGGWVAMLQQYFATAWIPHNDGTNNFYTANLGNGIVAIGYKSQPVLVQPGQTGAMNSTLWVGPEIQDKMAAVAPHLDLTVDYGWLWFISQPLFKLLKWIHSFVGNWGFSIIIITFIVRGIMYPLTKAQYTSMAKMRMLQPKIQAMRERLGDDKQRISQEMMALYKAEKVNPLGGCFPLLIQMPIFLALYYMLMGSVELRQAPFALWIHDLSAQDPYYILPILMGVTMFFIQKMSPTTVTDPMQQKIMTFMPVIFTVFFLWFPSGLVLYYIVSNLVTIIQQQLIYRGLEKRGLHSREKKKS</sequence>
<comment type="function">
    <text evidence="1">Required for the insertion and/or proper folding and/or complex formation of integral membrane proteins into the membrane. Involved in integration of membrane proteins that insert both dependently and independently of the Sec translocase complex, as well as at least some lipoproteins. Aids folding of multispanning membrane proteins.</text>
</comment>
<comment type="subunit">
    <text evidence="1">Interacts with the Sec translocase complex via SecD. Specifically interacts with transmembrane segments of nascent integral membrane proteins during membrane integration.</text>
</comment>
<comment type="subcellular location">
    <subcellularLocation>
        <location evidence="1">Cell inner membrane</location>
        <topology evidence="1">Multi-pass membrane protein</topology>
    </subcellularLocation>
</comment>
<comment type="similarity">
    <text evidence="1">Belongs to the OXA1/ALB3/YidC family. Type 1 subfamily.</text>
</comment>
<organism>
    <name type="scientific">Shigella flexneri</name>
    <dbReference type="NCBI Taxonomy" id="623"/>
    <lineage>
        <taxon>Bacteria</taxon>
        <taxon>Pseudomonadati</taxon>
        <taxon>Pseudomonadota</taxon>
        <taxon>Gammaproteobacteria</taxon>
        <taxon>Enterobacterales</taxon>
        <taxon>Enterobacteriaceae</taxon>
        <taxon>Shigella</taxon>
    </lineage>
</organism>
<keyword id="KW-0997">Cell inner membrane</keyword>
<keyword id="KW-1003">Cell membrane</keyword>
<keyword id="KW-0143">Chaperone</keyword>
<keyword id="KW-0472">Membrane</keyword>
<keyword id="KW-0653">Protein transport</keyword>
<keyword id="KW-1185">Reference proteome</keyword>
<keyword id="KW-0812">Transmembrane</keyword>
<keyword id="KW-1133">Transmembrane helix</keyword>
<keyword id="KW-0813">Transport</keyword>
<dbReference type="EMBL" id="AE005674">
    <property type="protein sequence ID" value="AAN45202.2"/>
    <property type="molecule type" value="Genomic_DNA"/>
</dbReference>
<dbReference type="EMBL" id="AE014073">
    <property type="protein sequence ID" value="AAP18995.1"/>
    <property type="molecule type" value="Genomic_DNA"/>
</dbReference>
<dbReference type="RefSeq" id="NP_709495.2">
    <property type="nucleotide sequence ID" value="NC_004337.2"/>
</dbReference>
<dbReference type="RefSeq" id="WP_000378252.1">
    <property type="nucleotide sequence ID" value="NZ_WPGW01000019.1"/>
</dbReference>
<dbReference type="SMR" id="P59783"/>
<dbReference type="STRING" id="198214.SF3759"/>
<dbReference type="PaxDb" id="198214-SF3759"/>
<dbReference type="GeneID" id="1026159"/>
<dbReference type="KEGG" id="sfl:SF3759"/>
<dbReference type="KEGG" id="sfx:S4012"/>
<dbReference type="PATRIC" id="fig|198214.7.peg.4436"/>
<dbReference type="HOGENOM" id="CLU_016535_3_0_6"/>
<dbReference type="Proteomes" id="UP000001006">
    <property type="component" value="Chromosome"/>
</dbReference>
<dbReference type="Proteomes" id="UP000002673">
    <property type="component" value="Chromosome"/>
</dbReference>
<dbReference type="GO" id="GO:0005886">
    <property type="term" value="C:plasma membrane"/>
    <property type="evidence" value="ECO:0007669"/>
    <property type="project" value="UniProtKB-SubCell"/>
</dbReference>
<dbReference type="GO" id="GO:0032977">
    <property type="term" value="F:membrane insertase activity"/>
    <property type="evidence" value="ECO:0007669"/>
    <property type="project" value="InterPro"/>
</dbReference>
<dbReference type="GO" id="GO:0051205">
    <property type="term" value="P:protein insertion into membrane"/>
    <property type="evidence" value="ECO:0007669"/>
    <property type="project" value="TreeGrafter"/>
</dbReference>
<dbReference type="GO" id="GO:0015031">
    <property type="term" value="P:protein transport"/>
    <property type="evidence" value="ECO:0007669"/>
    <property type="project" value="UniProtKB-KW"/>
</dbReference>
<dbReference type="CDD" id="cd20070">
    <property type="entry name" value="5TM_YidC_Alb3"/>
    <property type="match status" value="1"/>
</dbReference>
<dbReference type="CDD" id="cd19961">
    <property type="entry name" value="EcYidC-like_peri"/>
    <property type="match status" value="1"/>
</dbReference>
<dbReference type="FunFam" id="2.70.98.90:FF:000001">
    <property type="entry name" value="Membrane protein insertase YidC"/>
    <property type="match status" value="1"/>
</dbReference>
<dbReference type="Gene3D" id="2.70.98.90">
    <property type="match status" value="1"/>
</dbReference>
<dbReference type="HAMAP" id="MF_01810">
    <property type="entry name" value="YidC_type1"/>
    <property type="match status" value="1"/>
</dbReference>
<dbReference type="InterPro" id="IPR019998">
    <property type="entry name" value="Membr_insert_YidC"/>
</dbReference>
<dbReference type="InterPro" id="IPR028053">
    <property type="entry name" value="Membr_insert_YidC_N"/>
</dbReference>
<dbReference type="InterPro" id="IPR001708">
    <property type="entry name" value="YidC/ALB3/OXA1/COX18"/>
</dbReference>
<dbReference type="InterPro" id="IPR028055">
    <property type="entry name" value="YidC/Oxa/ALB_C"/>
</dbReference>
<dbReference type="InterPro" id="IPR047196">
    <property type="entry name" value="YidC_ALB_C"/>
</dbReference>
<dbReference type="InterPro" id="IPR038221">
    <property type="entry name" value="YidC_periplasmic_sf"/>
</dbReference>
<dbReference type="NCBIfam" id="NF002351">
    <property type="entry name" value="PRK01318.1-1"/>
    <property type="match status" value="1"/>
</dbReference>
<dbReference type="NCBIfam" id="NF002352">
    <property type="entry name" value="PRK01318.1-3"/>
    <property type="match status" value="1"/>
</dbReference>
<dbReference type="NCBIfam" id="NF002353">
    <property type="entry name" value="PRK01318.1-4"/>
    <property type="match status" value="1"/>
</dbReference>
<dbReference type="NCBIfam" id="TIGR03593">
    <property type="entry name" value="yidC_nterm"/>
    <property type="match status" value="1"/>
</dbReference>
<dbReference type="NCBIfam" id="TIGR03592">
    <property type="entry name" value="yidC_oxa1_cterm"/>
    <property type="match status" value="1"/>
</dbReference>
<dbReference type="PANTHER" id="PTHR12428:SF65">
    <property type="entry name" value="CYTOCHROME C OXIDASE ASSEMBLY PROTEIN COX18, MITOCHONDRIAL"/>
    <property type="match status" value="1"/>
</dbReference>
<dbReference type="PANTHER" id="PTHR12428">
    <property type="entry name" value="OXA1"/>
    <property type="match status" value="1"/>
</dbReference>
<dbReference type="Pfam" id="PF02096">
    <property type="entry name" value="60KD_IMP"/>
    <property type="match status" value="1"/>
</dbReference>
<dbReference type="Pfam" id="PF14849">
    <property type="entry name" value="YidC_periplas"/>
    <property type="match status" value="1"/>
</dbReference>
<dbReference type="PRINTS" id="PR00701">
    <property type="entry name" value="60KDINNERMP"/>
</dbReference>
<dbReference type="PRINTS" id="PR01900">
    <property type="entry name" value="YIDCPROTEIN"/>
</dbReference>
<gene>
    <name evidence="1" type="primary">yidC</name>
    <name type="ordered locus">SF3759</name>
    <name type="ordered locus">S4012</name>
</gene>
<evidence type="ECO:0000255" key="1">
    <source>
        <dbReference type="HAMAP-Rule" id="MF_01810"/>
    </source>
</evidence>
<evidence type="ECO:0000256" key="2">
    <source>
        <dbReference type="SAM" id="MobiDB-lite"/>
    </source>
</evidence>
<evidence type="ECO:0000305" key="3"/>
<proteinExistence type="inferred from homology"/>
<protein>
    <recommendedName>
        <fullName evidence="1">Membrane protein insertase YidC</fullName>
    </recommendedName>
    <alternativeName>
        <fullName evidence="1">Foldase YidC</fullName>
    </alternativeName>
    <alternativeName>
        <fullName evidence="1">Membrane integrase YidC</fullName>
    </alternativeName>
    <alternativeName>
        <fullName evidence="1">Membrane protein YidC</fullName>
    </alternativeName>
</protein>